<accession>Q2T9M9</accession>
<keyword id="KW-0970">Cilium biogenesis/degradation</keyword>
<keyword id="KW-1185">Reference proteome</keyword>
<evidence type="ECO:0000250" key="1">
    <source>
        <dbReference type="UniProtKB" id="E9Q793"/>
    </source>
</evidence>
<evidence type="ECO:0000256" key="2">
    <source>
        <dbReference type="SAM" id="MobiDB-lite"/>
    </source>
</evidence>
<reference key="1">
    <citation type="submission" date="2005-12" db="EMBL/GenBank/DDBJ databases">
        <authorList>
            <consortium name="NIH - Mammalian Gene Collection (MGC) project"/>
        </authorList>
    </citation>
    <scope>NUCLEOTIDE SEQUENCE [LARGE SCALE MRNA]</scope>
    <source>
        <strain>Crossbred X Angus</strain>
        <tissue>Liver</tissue>
    </source>
</reference>
<feature type="chain" id="PRO_0000281675" description="Jhy protein homolog">
    <location>
        <begin position="1"/>
        <end position="773"/>
    </location>
</feature>
<feature type="region of interest" description="Disordered" evidence="2">
    <location>
        <begin position="1"/>
        <end position="247"/>
    </location>
</feature>
<feature type="region of interest" description="Disordered" evidence="2">
    <location>
        <begin position="325"/>
        <end position="373"/>
    </location>
</feature>
<feature type="region of interest" description="Disordered" evidence="2">
    <location>
        <begin position="496"/>
        <end position="526"/>
    </location>
</feature>
<feature type="region of interest" description="Disordered" evidence="2">
    <location>
        <begin position="596"/>
        <end position="615"/>
    </location>
</feature>
<feature type="region of interest" description="Disordered" evidence="2">
    <location>
        <begin position="713"/>
        <end position="743"/>
    </location>
</feature>
<feature type="compositionally biased region" description="Polar residues" evidence="2">
    <location>
        <begin position="10"/>
        <end position="28"/>
    </location>
</feature>
<feature type="compositionally biased region" description="Basic and acidic residues" evidence="2">
    <location>
        <begin position="29"/>
        <end position="43"/>
    </location>
</feature>
<feature type="compositionally biased region" description="Polar residues" evidence="2">
    <location>
        <begin position="48"/>
        <end position="57"/>
    </location>
</feature>
<feature type="compositionally biased region" description="Acidic residues" evidence="2">
    <location>
        <begin position="59"/>
        <end position="84"/>
    </location>
</feature>
<feature type="compositionally biased region" description="Basic and acidic residues" evidence="2">
    <location>
        <begin position="112"/>
        <end position="134"/>
    </location>
</feature>
<feature type="compositionally biased region" description="Polar residues" evidence="2">
    <location>
        <begin position="145"/>
        <end position="154"/>
    </location>
</feature>
<feature type="compositionally biased region" description="Low complexity" evidence="2">
    <location>
        <begin position="216"/>
        <end position="229"/>
    </location>
</feature>
<feature type="compositionally biased region" description="Polar residues" evidence="2">
    <location>
        <begin position="334"/>
        <end position="351"/>
    </location>
</feature>
<feature type="compositionally biased region" description="Basic residues" evidence="2">
    <location>
        <begin position="353"/>
        <end position="369"/>
    </location>
</feature>
<feature type="compositionally biased region" description="Polar residues" evidence="2">
    <location>
        <begin position="500"/>
        <end position="516"/>
    </location>
</feature>
<feature type="compositionally biased region" description="Low complexity" evidence="2">
    <location>
        <begin position="598"/>
        <end position="610"/>
    </location>
</feature>
<feature type="compositionally biased region" description="Basic and acidic residues" evidence="2">
    <location>
        <begin position="728"/>
        <end position="743"/>
    </location>
</feature>
<comment type="function">
    <text evidence="1">Required for the normal development of cilia in brain ependymal cells lining the ventricular surfaces.</text>
</comment>
<gene>
    <name type="primary">JHY</name>
</gene>
<organism>
    <name type="scientific">Bos taurus</name>
    <name type="common">Bovine</name>
    <dbReference type="NCBI Taxonomy" id="9913"/>
    <lineage>
        <taxon>Eukaryota</taxon>
        <taxon>Metazoa</taxon>
        <taxon>Chordata</taxon>
        <taxon>Craniata</taxon>
        <taxon>Vertebrata</taxon>
        <taxon>Euteleostomi</taxon>
        <taxon>Mammalia</taxon>
        <taxon>Eutheria</taxon>
        <taxon>Laurasiatheria</taxon>
        <taxon>Artiodactyla</taxon>
        <taxon>Ruminantia</taxon>
        <taxon>Pecora</taxon>
        <taxon>Bovidae</taxon>
        <taxon>Bovinae</taxon>
        <taxon>Bos</taxon>
    </lineage>
</organism>
<protein>
    <recommendedName>
        <fullName>Jhy protein homolog</fullName>
    </recommendedName>
</protein>
<name>JHY_BOVIN</name>
<dbReference type="EMBL" id="BC111348">
    <property type="protein sequence ID" value="AAI11349.1"/>
    <property type="molecule type" value="mRNA"/>
</dbReference>
<dbReference type="RefSeq" id="NP_001033297.1">
    <property type="nucleotide sequence ID" value="NM_001038208.1"/>
</dbReference>
<dbReference type="SMR" id="Q2T9M9"/>
<dbReference type="FunCoup" id="Q2T9M9">
    <property type="interactions" value="25"/>
</dbReference>
<dbReference type="STRING" id="9913.ENSBTAP00000047568"/>
<dbReference type="GeneID" id="615337"/>
<dbReference type="KEGG" id="bta:615337"/>
<dbReference type="CTD" id="79864"/>
<dbReference type="InParanoid" id="Q2T9M9"/>
<dbReference type="OrthoDB" id="10057281at2759"/>
<dbReference type="Proteomes" id="UP000009136">
    <property type="component" value="Unplaced"/>
</dbReference>
<dbReference type="GO" id="GO:0035082">
    <property type="term" value="P:axoneme assembly"/>
    <property type="evidence" value="ECO:0000318"/>
    <property type="project" value="GO_Central"/>
</dbReference>
<dbReference type="GO" id="GO:0007420">
    <property type="term" value="P:brain development"/>
    <property type="evidence" value="ECO:0000318"/>
    <property type="project" value="GO_Central"/>
</dbReference>
<dbReference type="InterPro" id="IPR027968">
    <property type="entry name" value="JHY"/>
</dbReference>
<dbReference type="PANTHER" id="PTHR14726">
    <property type="entry name" value="JHY PROTEIN HOMOLOG"/>
    <property type="match status" value="1"/>
</dbReference>
<dbReference type="PANTHER" id="PTHR14726:SF1">
    <property type="entry name" value="JHY PROTEIN HOMOLOG"/>
    <property type="match status" value="1"/>
</dbReference>
<dbReference type="Pfam" id="PF15261">
    <property type="entry name" value="JHY"/>
    <property type="match status" value="1"/>
</dbReference>
<sequence length="773" mass="87993">MSHSKFIPTVSIQSPVHHTNIKVQSTEPSFKKEDLHLISKDSLESDSESPTQKIKSQSDLEDQIQDNDMEPDSLEEENLSETEEEASRKAAQRAKKENLHTQDAAAINSRQPTEDKYSHIRYDPNWKSKKEEGKLLPVEALPESVDSSTENLTLNPLYPSKEPSMDLSAGKGEQKSPRSTASLLGSEFVSPNYELSTHRTEPFSVLSDSDPEEKSSNLSRYLKSSSSRSEAFLPGSRGPRRRKSKQYFVEKNKLTLGLPTPRMDSYLQLHNKKRGEGHLEQISYPVRVTDKTSIQNARETGNVAIDPEDKWHQRAQQLKDYQEHWSQYEHEKSSSGPRGQSSETTNGQQPSRKPAKHKIRKQRRHRHGPKSLVTEELVVSQGNQNNTPRHQQNPNKPIDTEVTQETVVIMNATNDDLQYSSVLRSQDPTVTSNQYAPLHQISDKVLYKNPARYYPVTNANRERGHNDQEEKRFSYQQLHIDTLSDMHLNYLHELNKKHPSGSQKGSQSVSNINRQASTEKKKQPKLAYTETKYKNLEILWKFHSSSEEQPAKASPDSRLSQIMEQHQQALLQLTEVQPHEGASPGLTLPPILPRVESESQLSSERSQRNQVKISRSNSESYLFQLEKGKKHRKRSSIKSSKLKGYQNRDVKLGGLGPDLESIRDKMQKLIQQKEYAKQVKEYNMKALSIPSKPQTAITENKSAVPRQKALEYAKTIPKPKPSNLSDQASKEKKTPTHAGKEDTLPEISLLEVLQNRHEREKQAVAAFKVLHIV</sequence>
<proteinExistence type="evidence at transcript level"/>